<gene>
    <name type="primary">ATG3</name>
    <name type="ordered locus">DEHA2D09900g</name>
</gene>
<keyword id="KW-0072">Autophagy</keyword>
<keyword id="KW-0963">Cytoplasm</keyword>
<keyword id="KW-0653">Protein transport</keyword>
<keyword id="KW-1185">Reference proteome</keyword>
<keyword id="KW-0813">Transport</keyword>
<keyword id="KW-0833">Ubl conjugation pathway</keyword>
<accession>Q6BSC4</accession>
<sequence>MLRSKLSSLREYLTPIRHTSDFTTTGEISPEEFVEAGDYLVYKFPTWQWSSAPDKLKKDFLPPDKQYLITKHVSSYQRAVTYLGIKSDLDEDEEELEDGWVKSHKINNDPSRLKTDASGENSGGNTNDNDDTNEINDIDELIDENAEEQSSEDENDFEELVETNANSNLRKYDLYITYSTSYRVPKMYLVGFNSNGIPLLPKQMFEDISGDYRDKTATIETLPVSYNTMSVSIHPCKHSSVMKVLMAHAAASKKRENPADLTDLAEQTGSLNLKDKVPGRDFGEDVDIEENVPGIRVDQYLIIFLKFIASVTPGIEYDYTMDAL</sequence>
<name>ATG3_DEBHA</name>
<feature type="chain" id="PRO_0000213579" description="Autophagy-related protein 3">
    <location>
        <begin position="1"/>
        <end position="324"/>
    </location>
</feature>
<feature type="region of interest" description="Flexible region" evidence="1">
    <location>
        <begin position="82"/>
        <end position="166"/>
    </location>
</feature>
<feature type="region of interest" description="Disordered" evidence="2">
    <location>
        <begin position="100"/>
        <end position="134"/>
    </location>
</feature>
<feature type="region of interest" description="Handle region" evidence="1">
    <location>
        <begin position="240"/>
        <end position="299"/>
    </location>
</feature>
<feature type="active site" description="Glycyl thioester intermediate" evidence="1">
    <location>
        <position position="236"/>
    </location>
</feature>
<organism>
    <name type="scientific">Debaryomyces hansenii (strain ATCC 36239 / CBS 767 / BCRC 21394 / JCM 1990 / NBRC 0083 / IGC 2968)</name>
    <name type="common">Yeast</name>
    <name type="synonym">Torulaspora hansenii</name>
    <dbReference type="NCBI Taxonomy" id="284592"/>
    <lineage>
        <taxon>Eukaryota</taxon>
        <taxon>Fungi</taxon>
        <taxon>Dikarya</taxon>
        <taxon>Ascomycota</taxon>
        <taxon>Saccharomycotina</taxon>
        <taxon>Pichiomycetes</taxon>
        <taxon>Debaryomycetaceae</taxon>
        <taxon>Debaryomyces</taxon>
    </lineage>
</organism>
<dbReference type="EMBL" id="CR382136">
    <property type="protein sequence ID" value="CAG87049.2"/>
    <property type="molecule type" value="Genomic_DNA"/>
</dbReference>
<dbReference type="RefSeq" id="XP_458896.2">
    <property type="nucleotide sequence ID" value="XM_458896.1"/>
</dbReference>
<dbReference type="SMR" id="Q6BSC4"/>
<dbReference type="FunCoup" id="Q6BSC4">
    <property type="interactions" value="1123"/>
</dbReference>
<dbReference type="STRING" id="284592.Q6BSC4"/>
<dbReference type="GeneID" id="2901758"/>
<dbReference type="KEGG" id="dha:DEHA2D09900g"/>
<dbReference type="VEuPathDB" id="FungiDB:DEHA2D09900g"/>
<dbReference type="eggNOG" id="KOG2981">
    <property type="taxonomic scope" value="Eukaryota"/>
</dbReference>
<dbReference type="HOGENOM" id="CLU_027518_2_0_1"/>
<dbReference type="InParanoid" id="Q6BSC4"/>
<dbReference type="OMA" id="HCPTWSW"/>
<dbReference type="OrthoDB" id="1584384at2759"/>
<dbReference type="Proteomes" id="UP000000599">
    <property type="component" value="Chromosome D"/>
</dbReference>
<dbReference type="GO" id="GO:0005829">
    <property type="term" value="C:cytosol"/>
    <property type="evidence" value="ECO:0007669"/>
    <property type="project" value="EnsemblFungi"/>
</dbReference>
<dbReference type="GO" id="GO:0005739">
    <property type="term" value="C:mitochondrion"/>
    <property type="evidence" value="ECO:0007669"/>
    <property type="project" value="EnsemblFungi"/>
</dbReference>
<dbReference type="GO" id="GO:0061908">
    <property type="term" value="C:phagophore"/>
    <property type="evidence" value="ECO:0007669"/>
    <property type="project" value="EnsemblFungi"/>
</dbReference>
<dbReference type="GO" id="GO:0000407">
    <property type="term" value="C:phagophore assembly site"/>
    <property type="evidence" value="ECO:0007669"/>
    <property type="project" value="EnsemblFungi"/>
</dbReference>
<dbReference type="GO" id="GO:0019776">
    <property type="term" value="F:Atg8-family ligase activity"/>
    <property type="evidence" value="ECO:0007669"/>
    <property type="project" value="EnsemblFungi"/>
</dbReference>
<dbReference type="GO" id="GO:0000045">
    <property type="term" value="P:autophagosome assembly"/>
    <property type="evidence" value="ECO:0007669"/>
    <property type="project" value="EnsemblFungi"/>
</dbReference>
<dbReference type="GO" id="GO:0000422">
    <property type="term" value="P:autophagy of mitochondrion"/>
    <property type="evidence" value="ECO:0007669"/>
    <property type="project" value="EnsemblFungi"/>
</dbReference>
<dbReference type="GO" id="GO:0032258">
    <property type="term" value="P:cytoplasm to vacuole targeting by the Cvt pathway"/>
    <property type="evidence" value="ECO:0007669"/>
    <property type="project" value="EnsemblFungi"/>
</dbReference>
<dbReference type="GO" id="GO:0061723">
    <property type="term" value="P:glycophagy"/>
    <property type="evidence" value="ECO:0007669"/>
    <property type="project" value="TreeGrafter"/>
</dbReference>
<dbReference type="GO" id="GO:0034727">
    <property type="term" value="P:piecemeal microautophagy of the nucleus"/>
    <property type="evidence" value="ECO:0007669"/>
    <property type="project" value="EnsemblFungi"/>
</dbReference>
<dbReference type="GO" id="GO:0006612">
    <property type="term" value="P:protein targeting to membrane"/>
    <property type="evidence" value="ECO:0007669"/>
    <property type="project" value="EnsemblFungi"/>
</dbReference>
<dbReference type="Gene3D" id="3.30.1460.50">
    <property type="match status" value="1"/>
</dbReference>
<dbReference type="InterPro" id="IPR007135">
    <property type="entry name" value="Atg3/Atg10"/>
</dbReference>
<dbReference type="PANTHER" id="PTHR12866">
    <property type="entry name" value="UBIQUITIN-LIKE-CONJUGATING ENZYME ATG3"/>
    <property type="match status" value="1"/>
</dbReference>
<dbReference type="PANTHER" id="PTHR12866:SF2">
    <property type="entry name" value="UBIQUITIN-LIKE-CONJUGATING ENZYME ATG3"/>
    <property type="match status" value="1"/>
</dbReference>
<dbReference type="Pfam" id="PF03987">
    <property type="entry name" value="Autophagy_act_C"/>
    <property type="match status" value="1"/>
</dbReference>
<comment type="function">
    <text evidence="1">E2 conjugating enzyme required for the cytoplasm to vacuole transport (Cvt) and autophagy. Required for selective autophagic degradation of the nucleus (nucleophagy) as well as for mitophagy which contributes to regulate mitochondrial quantity and quality by eliminating the mitochondria to a basal level to fulfill cellular energy requirements and preventing excess ROS production. Responsible for the E2-like covalent binding of phosphatidylethanolamine to the C-terminal Gly of ATG8. The ATG12-ATG5 conjugate plays a role of an E3 and promotes the transfer of ATG8 from ATG3 to phosphatidylethanolamine (PE). This step is required for the membrane association of ATG8. The formation of the ATG8-phosphatidylethanolamine conjugate is essential for autophagy and for the cytoplasm to vacuole transport (Cvt). The ATG8-PE conjugate mediates tethering between adjacent membranes and stimulates membrane hemifusion, leading to expansion of the autophagosomal membrane during autophagy (By similarity).</text>
</comment>
<comment type="subunit">
    <text evidence="1">Monomer. Interacts with ATG8 through an intermediate thioester bond through the C-terminal Gly of ATG8. Also interacts with the 40 amino acid C-terminal region of the E1-like ATG7 enzyme. Also interacts with the ATG12-ATG5 conjugate.</text>
</comment>
<comment type="subcellular location">
    <subcellularLocation>
        <location evidence="1">Cytoplasm</location>
    </subcellularLocation>
</comment>
<comment type="domain">
    <text evidence="1">The N-terminal region is involved in phosphatidylethanolamine-binding and is required for ATG8-PE conjugation.</text>
</comment>
<comment type="domain">
    <text evidence="1">The flexible region (FR) is required for ATG7-binding.</text>
</comment>
<comment type="domain">
    <text evidence="1">The handle region (HR) contains the ATG8 interaction motif (AIM) and mediates binding to ATG8. It is crucial for the cytoplasm-to-vacuole targeting pathway (By similarity).</text>
</comment>
<comment type="similarity">
    <text evidence="3">Belongs to the ATG3 family.</text>
</comment>
<evidence type="ECO:0000250" key="1"/>
<evidence type="ECO:0000256" key="2">
    <source>
        <dbReference type="SAM" id="MobiDB-lite"/>
    </source>
</evidence>
<evidence type="ECO:0000305" key="3"/>
<proteinExistence type="inferred from homology"/>
<reference key="1">
    <citation type="journal article" date="2004" name="Nature">
        <title>Genome evolution in yeasts.</title>
        <authorList>
            <person name="Dujon B."/>
            <person name="Sherman D."/>
            <person name="Fischer G."/>
            <person name="Durrens P."/>
            <person name="Casaregola S."/>
            <person name="Lafontaine I."/>
            <person name="de Montigny J."/>
            <person name="Marck C."/>
            <person name="Neuveglise C."/>
            <person name="Talla E."/>
            <person name="Goffard N."/>
            <person name="Frangeul L."/>
            <person name="Aigle M."/>
            <person name="Anthouard V."/>
            <person name="Babour A."/>
            <person name="Barbe V."/>
            <person name="Barnay S."/>
            <person name="Blanchin S."/>
            <person name="Beckerich J.-M."/>
            <person name="Beyne E."/>
            <person name="Bleykasten C."/>
            <person name="Boisrame A."/>
            <person name="Boyer J."/>
            <person name="Cattolico L."/>
            <person name="Confanioleri F."/>
            <person name="de Daruvar A."/>
            <person name="Despons L."/>
            <person name="Fabre E."/>
            <person name="Fairhead C."/>
            <person name="Ferry-Dumazet H."/>
            <person name="Groppi A."/>
            <person name="Hantraye F."/>
            <person name="Hennequin C."/>
            <person name="Jauniaux N."/>
            <person name="Joyet P."/>
            <person name="Kachouri R."/>
            <person name="Kerrest A."/>
            <person name="Koszul R."/>
            <person name="Lemaire M."/>
            <person name="Lesur I."/>
            <person name="Ma L."/>
            <person name="Muller H."/>
            <person name="Nicaud J.-M."/>
            <person name="Nikolski M."/>
            <person name="Oztas S."/>
            <person name="Ozier-Kalogeropoulos O."/>
            <person name="Pellenz S."/>
            <person name="Potier S."/>
            <person name="Richard G.-F."/>
            <person name="Straub M.-L."/>
            <person name="Suleau A."/>
            <person name="Swennen D."/>
            <person name="Tekaia F."/>
            <person name="Wesolowski-Louvel M."/>
            <person name="Westhof E."/>
            <person name="Wirth B."/>
            <person name="Zeniou-Meyer M."/>
            <person name="Zivanovic Y."/>
            <person name="Bolotin-Fukuhara M."/>
            <person name="Thierry A."/>
            <person name="Bouchier C."/>
            <person name="Caudron B."/>
            <person name="Scarpelli C."/>
            <person name="Gaillardin C."/>
            <person name="Weissenbach J."/>
            <person name="Wincker P."/>
            <person name="Souciet J.-L."/>
        </authorList>
    </citation>
    <scope>NUCLEOTIDE SEQUENCE [LARGE SCALE GENOMIC DNA]</scope>
    <source>
        <strain>ATCC 36239 / CBS 767 / BCRC 21394 / JCM 1990 / NBRC 0083 / IGC 2968</strain>
    </source>
</reference>
<protein>
    <recommendedName>
        <fullName>Autophagy-related protein 3</fullName>
    </recommendedName>
    <alternativeName>
        <fullName>Autophagy-related E2-like conjugation enzyme ATG3</fullName>
    </alternativeName>
</protein>